<organism>
    <name type="scientific">Streptococcus pyogenes serotype M3 (strain ATCC BAA-595 / MGAS315)</name>
    <dbReference type="NCBI Taxonomy" id="198466"/>
    <lineage>
        <taxon>Bacteria</taxon>
        <taxon>Bacillati</taxon>
        <taxon>Bacillota</taxon>
        <taxon>Bacilli</taxon>
        <taxon>Lactobacillales</taxon>
        <taxon>Streptococcaceae</taxon>
        <taxon>Streptococcus</taxon>
    </lineage>
</organism>
<accession>P0DF74</accession>
<accession>Q8K886</accession>
<feature type="chain" id="PRO_0000213311" description="Protein SprT-like">
    <location>
        <begin position="1"/>
        <end position="145"/>
    </location>
</feature>
<feature type="domain" description="SprT-like" evidence="1">
    <location>
        <begin position="4"/>
        <end position="140"/>
    </location>
</feature>
<feature type="active site" evidence="1">
    <location>
        <position position="65"/>
    </location>
</feature>
<feature type="binding site" evidence="1">
    <location>
        <position position="64"/>
    </location>
    <ligand>
        <name>Zn(2+)</name>
        <dbReference type="ChEBI" id="CHEBI:29105"/>
    </ligand>
</feature>
<feature type="binding site" evidence="1">
    <location>
        <position position="68"/>
    </location>
    <ligand>
        <name>Zn(2+)</name>
        <dbReference type="ChEBI" id="CHEBI:29105"/>
    </ligand>
</feature>
<dbReference type="EMBL" id="AE014074">
    <property type="protein sequence ID" value="AAM79017.1"/>
    <property type="status" value="ALT_INIT"/>
    <property type="molecule type" value="Genomic_DNA"/>
</dbReference>
<dbReference type="RefSeq" id="WP_002990585.1">
    <property type="nucleotide sequence ID" value="NC_004070.1"/>
</dbReference>
<dbReference type="KEGG" id="spg:SpyM3_0410"/>
<dbReference type="HOGENOM" id="CLU_123820_0_0_9"/>
<dbReference type="Proteomes" id="UP000000564">
    <property type="component" value="Chromosome"/>
</dbReference>
<dbReference type="GO" id="GO:0005737">
    <property type="term" value="C:cytoplasm"/>
    <property type="evidence" value="ECO:0007669"/>
    <property type="project" value="UniProtKB-SubCell"/>
</dbReference>
<dbReference type="GO" id="GO:0008270">
    <property type="term" value="F:zinc ion binding"/>
    <property type="evidence" value="ECO:0007669"/>
    <property type="project" value="UniProtKB-UniRule"/>
</dbReference>
<dbReference type="GO" id="GO:0006950">
    <property type="term" value="P:response to stress"/>
    <property type="evidence" value="ECO:0007669"/>
    <property type="project" value="UniProtKB-ARBA"/>
</dbReference>
<dbReference type="HAMAP" id="MF_00745">
    <property type="entry name" value="SprT_like"/>
    <property type="match status" value="1"/>
</dbReference>
<dbReference type="InterPro" id="IPR006640">
    <property type="entry name" value="SprT-like_domain"/>
</dbReference>
<dbReference type="InterPro" id="IPR023524">
    <property type="entry name" value="Uncharacterised_SprT-like"/>
</dbReference>
<dbReference type="NCBIfam" id="NF003339">
    <property type="entry name" value="PRK04351.1"/>
    <property type="match status" value="1"/>
</dbReference>
<dbReference type="Pfam" id="PF10263">
    <property type="entry name" value="SprT-like"/>
    <property type="match status" value="1"/>
</dbReference>
<dbReference type="SMART" id="SM00731">
    <property type="entry name" value="SprT"/>
    <property type="match status" value="1"/>
</dbReference>
<comment type="cofactor">
    <cofactor evidence="1">
        <name>Zn(2+)</name>
        <dbReference type="ChEBI" id="CHEBI:29105"/>
    </cofactor>
    <text evidence="1">Binds 1 zinc ion.</text>
</comment>
<comment type="subcellular location">
    <subcellularLocation>
        <location evidence="1">Cytoplasm</location>
    </subcellularLocation>
</comment>
<comment type="similarity">
    <text evidence="1">Belongs to the SprT family.</text>
</comment>
<comment type="sequence caution" evidence="2">
    <conflict type="erroneous initiation">
        <sequence resource="EMBL-CDS" id="AAM79017"/>
    </conflict>
</comment>
<keyword id="KW-0963">Cytoplasm</keyword>
<keyword id="KW-0479">Metal-binding</keyword>
<keyword id="KW-0862">Zinc</keyword>
<reference key="1">
    <citation type="journal article" date="2002" name="Proc. Natl. Acad. Sci. U.S.A.">
        <title>Genome sequence of a serotype M3 strain of group A Streptococcus: phage-encoded toxins, the high-virulence phenotype, and clone emergence.</title>
        <authorList>
            <person name="Beres S.B."/>
            <person name="Sylva G.L."/>
            <person name="Barbian K.D."/>
            <person name="Lei B."/>
            <person name="Hoff J.S."/>
            <person name="Mammarella N.D."/>
            <person name="Liu M.-Y."/>
            <person name="Smoot J.C."/>
            <person name="Porcella S.F."/>
            <person name="Parkins L.D."/>
            <person name="Campbell D.S."/>
            <person name="Smith T.M."/>
            <person name="McCormick J.K."/>
            <person name="Leung D.Y.M."/>
            <person name="Schlievert P.M."/>
            <person name="Musser J.M."/>
        </authorList>
    </citation>
    <scope>NUCLEOTIDE SEQUENCE [LARGE SCALE GENOMIC DNA]</scope>
    <source>
        <strain>ATCC BAA-595 / MGAS315</strain>
    </source>
</reference>
<evidence type="ECO:0000255" key="1">
    <source>
        <dbReference type="HAMAP-Rule" id="MF_00745"/>
    </source>
</evidence>
<evidence type="ECO:0000305" key="2"/>
<sequence length="145" mass="17229">MTLTNYVQEVSLADFGKPFHHKAYWNKRLKTTGGRFFPKDGHLDFNPRMLEEHGELIFRKIVRHELCHYHLYFEGRGYHHKDRDFKDLLAQVNGLRYVPTSSKSKTNHHYSCQTCGQVYQRKRRINLAKYVCGNCHGKLMEKNQS</sequence>
<proteinExistence type="inferred from homology"/>
<gene>
    <name type="ordered locus">SpyM3_0410</name>
</gene>
<protein>
    <recommendedName>
        <fullName evidence="1">Protein SprT-like</fullName>
    </recommendedName>
</protein>
<name>SPRTL_STRP3</name>